<reference key="1">
    <citation type="submission" date="2006-08" db="EMBL/GenBank/DDBJ databases">
        <title>Complete sequence of Maricaulis maris MCS10.</title>
        <authorList>
            <consortium name="US DOE Joint Genome Institute"/>
            <person name="Copeland A."/>
            <person name="Lucas S."/>
            <person name="Lapidus A."/>
            <person name="Barry K."/>
            <person name="Detter J.C."/>
            <person name="Glavina del Rio T."/>
            <person name="Hammon N."/>
            <person name="Israni S."/>
            <person name="Dalin E."/>
            <person name="Tice H."/>
            <person name="Pitluck S."/>
            <person name="Saunders E."/>
            <person name="Brettin T."/>
            <person name="Bruce D."/>
            <person name="Han C."/>
            <person name="Tapia R."/>
            <person name="Gilna P."/>
            <person name="Schmutz J."/>
            <person name="Larimer F."/>
            <person name="Land M."/>
            <person name="Hauser L."/>
            <person name="Kyrpides N."/>
            <person name="Mikhailova N."/>
            <person name="Viollier P."/>
            <person name="Stephens C."/>
            <person name="Richardson P."/>
        </authorList>
    </citation>
    <scope>NUCLEOTIDE SEQUENCE [LARGE SCALE GENOMIC DNA]</scope>
    <source>
        <strain>MCS10</strain>
    </source>
</reference>
<name>RS14_MARMM</name>
<dbReference type="EMBL" id="CP000449">
    <property type="protein sequence ID" value="ABI66074.1"/>
    <property type="molecule type" value="Genomic_DNA"/>
</dbReference>
<dbReference type="RefSeq" id="WP_011643720.1">
    <property type="nucleotide sequence ID" value="NC_008347.1"/>
</dbReference>
<dbReference type="SMR" id="Q0ANR3"/>
<dbReference type="STRING" id="394221.Mmar10_1782"/>
<dbReference type="KEGG" id="mmr:Mmar10_1782"/>
<dbReference type="eggNOG" id="COG0199">
    <property type="taxonomic scope" value="Bacteria"/>
</dbReference>
<dbReference type="HOGENOM" id="CLU_139869_0_1_5"/>
<dbReference type="OrthoDB" id="9810484at2"/>
<dbReference type="Proteomes" id="UP000001964">
    <property type="component" value="Chromosome"/>
</dbReference>
<dbReference type="GO" id="GO:0005737">
    <property type="term" value="C:cytoplasm"/>
    <property type="evidence" value="ECO:0007669"/>
    <property type="project" value="UniProtKB-ARBA"/>
</dbReference>
<dbReference type="GO" id="GO:0015935">
    <property type="term" value="C:small ribosomal subunit"/>
    <property type="evidence" value="ECO:0007669"/>
    <property type="project" value="TreeGrafter"/>
</dbReference>
<dbReference type="GO" id="GO:0019843">
    <property type="term" value="F:rRNA binding"/>
    <property type="evidence" value="ECO:0007669"/>
    <property type="project" value="UniProtKB-UniRule"/>
</dbReference>
<dbReference type="GO" id="GO:0003735">
    <property type="term" value="F:structural constituent of ribosome"/>
    <property type="evidence" value="ECO:0007669"/>
    <property type="project" value="InterPro"/>
</dbReference>
<dbReference type="GO" id="GO:0006412">
    <property type="term" value="P:translation"/>
    <property type="evidence" value="ECO:0007669"/>
    <property type="project" value="UniProtKB-UniRule"/>
</dbReference>
<dbReference type="FunFam" id="1.10.287.1480:FF:000001">
    <property type="entry name" value="30S ribosomal protein S14"/>
    <property type="match status" value="1"/>
</dbReference>
<dbReference type="Gene3D" id="1.10.287.1480">
    <property type="match status" value="1"/>
</dbReference>
<dbReference type="HAMAP" id="MF_00537">
    <property type="entry name" value="Ribosomal_uS14_1"/>
    <property type="match status" value="1"/>
</dbReference>
<dbReference type="InterPro" id="IPR001209">
    <property type="entry name" value="Ribosomal_uS14"/>
</dbReference>
<dbReference type="InterPro" id="IPR023036">
    <property type="entry name" value="Ribosomal_uS14_bac/plastid"/>
</dbReference>
<dbReference type="InterPro" id="IPR018271">
    <property type="entry name" value="Ribosomal_uS14_CS"/>
</dbReference>
<dbReference type="NCBIfam" id="NF006477">
    <property type="entry name" value="PRK08881.1"/>
    <property type="match status" value="1"/>
</dbReference>
<dbReference type="PANTHER" id="PTHR19836">
    <property type="entry name" value="30S RIBOSOMAL PROTEIN S14"/>
    <property type="match status" value="1"/>
</dbReference>
<dbReference type="PANTHER" id="PTHR19836:SF19">
    <property type="entry name" value="SMALL RIBOSOMAL SUBUNIT PROTEIN US14M"/>
    <property type="match status" value="1"/>
</dbReference>
<dbReference type="Pfam" id="PF00253">
    <property type="entry name" value="Ribosomal_S14"/>
    <property type="match status" value="1"/>
</dbReference>
<dbReference type="SUPFAM" id="SSF57716">
    <property type="entry name" value="Glucocorticoid receptor-like (DNA-binding domain)"/>
    <property type="match status" value="1"/>
</dbReference>
<dbReference type="PROSITE" id="PS00527">
    <property type="entry name" value="RIBOSOMAL_S14"/>
    <property type="match status" value="1"/>
</dbReference>
<keyword id="KW-1185">Reference proteome</keyword>
<keyword id="KW-0687">Ribonucleoprotein</keyword>
<keyword id="KW-0689">Ribosomal protein</keyword>
<keyword id="KW-0694">RNA-binding</keyword>
<keyword id="KW-0699">rRNA-binding</keyword>
<accession>Q0ANR3</accession>
<organism>
    <name type="scientific">Maricaulis maris (strain MCS10)</name>
    <name type="common">Caulobacter maris</name>
    <dbReference type="NCBI Taxonomy" id="394221"/>
    <lineage>
        <taxon>Bacteria</taxon>
        <taxon>Pseudomonadati</taxon>
        <taxon>Pseudomonadota</taxon>
        <taxon>Alphaproteobacteria</taxon>
        <taxon>Maricaulales</taxon>
        <taxon>Maricaulaceae</taxon>
        <taxon>Maricaulis</taxon>
    </lineage>
</organism>
<sequence>MAKTSAIERNLKRARLAKRYAAKREQLKAIARNQELPVEERFAAQLKLAELPRNSAVTRIRNRCEITGRPRAFYRKFRMSRIAMRDYASQGMIPGMVKSSW</sequence>
<feature type="chain" id="PRO_1000128441" description="Small ribosomal subunit protein uS14">
    <location>
        <begin position="1"/>
        <end position="101"/>
    </location>
</feature>
<protein>
    <recommendedName>
        <fullName evidence="1">Small ribosomal subunit protein uS14</fullName>
    </recommendedName>
    <alternativeName>
        <fullName evidence="2">30S ribosomal protein S14</fullName>
    </alternativeName>
</protein>
<gene>
    <name evidence="1" type="primary">rpsN</name>
    <name type="ordered locus">Mmar10_1782</name>
</gene>
<proteinExistence type="inferred from homology"/>
<comment type="function">
    <text evidence="1">Binds 16S rRNA, required for the assembly of 30S particles and may also be responsible for determining the conformation of the 16S rRNA at the A site.</text>
</comment>
<comment type="subunit">
    <text evidence="1">Part of the 30S ribosomal subunit. Contacts proteins S3 and S10.</text>
</comment>
<comment type="similarity">
    <text evidence="1">Belongs to the universal ribosomal protein uS14 family.</text>
</comment>
<evidence type="ECO:0000255" key="1">
    <source>
        <dbReference type="HAMAP-Rule" id="MF_00537"/>
    </source>
</evidence>
<evidence type="ECO:0000305" key="2"/>